<sequence length="306" mass="33925">MVEPMNWISEVVRPRIKTLFKRETPENLWIKCPDTGQMVFHKEVEQNHWVIPGSEHHLKMSAAARLKMMFDEGTWIDVPLPEVPADPLKFRDEKRYADRLKEARAKTGMPDAFKIGFGRVGGLPMTIAAQEFGFMAGSLGMAGGEAFVRGAETALEKRTPYVLFAASGGARMQEGILSLMQMPRTTVAVRRLRAARLPYIVVLTNPTTGGVTASYAMLGDVHLAEPGALICFAGPRVIEQTIREKLPDGFQRAEYLREHGMVDQVVHRHQLKETITRLCGLLMDVRQTPAGKPSTPVAPEPVPDAA</sequence>
<accession>B1ZLY6</accession>
<reference key="1">
    <citation type="submission" date="2008-04" db="EMBL/GenBank/DDBJ databases">
        <title>Complete sequence of chromosome of Methylobacterium populi BJ001.</title>
        <authorList>
            <consortium name="US DOE Joint Genome Institute"/>
            <person name="Copeland A."/>
            <person name="Lucas S."/>
            <person name="Lapidus A."/>
            <person name="Glavina del Rio T."/>
            <person name="Dalin E."/>
            <person name="Tice H."/>
            <person name="Bruce D."/>
            <person name="Goodwin L."/>
            <person name="Pitluck S."/>
            <person name="Chertkov O."/>
            <person name="Brettin T."/>
            <person name="Detter J.C."/>
            <person name="Han C."/>
            <person name="Kuske C.R."/>
            <person name="Schmutz J."/>
            <person name="Larimer F."/>
            <person name="Land M."/>
            <person name="Hauser L."/>
            <person name="Kyrpides N."/>
            <person name="Mikhailova N."/>
            <person name="Marx C."/>
            <person name="Richardson P."/>
        </authorList>
    </citation>
    <scope>NUCLEOTIDE SEQUENCE [LARGE SCALE GENOMIC DNA]</scope>
    <source>
        <strain>ATCC BAA-705 / NCIMB 13946 / BJ001</strain>
    </source>
</reference>
<evidence type="ECO:0000255" key="1">
    <source>
        <dbReference type="HAMAP-Rule" id="MF_01395"/>
    </source>
</evidence>
<evidence type="ECO:0000255" key="2">
    <source>
        <dbReference type="PROSITE-ProRule" id="PRU01136"/>
    </source>
</evidence>
<evidence type="ECO:0000256" key="3">
    <source>
        <dbReference type="SAM" id="MobiDB-lite"/>
    </source>
</evidence>
<protein>
    <recommendedName>
        <fullName evidence="1">Acetyl-coenzyme A carboxylase carboxyl transferase subunit beta</fullName>
        <shortName evidence="1">ACCase subunit beta</shortName>
        <shortName evidence="1">Acetyl-CoA carboxylase carboxyltransferase subunit beta</shortName>
        <ecNumber evidence="1">2.1.3.15</ecNumber>
    </recommendedName>
</protein>
<feature type="chain" id="PRO_0000389798" description="Acetyl-coenzyme A carboxylase carboxyl transferase subunit beta">
    <location>
        <begin position="1"/>
        <end position="306"/>
    </location>
</feature>
<feature type="domain" description="CoA carboxyltransferase N-terminal" evidence="2">
    <location>
        <begin position="28"/>
        <end position="297"/>
    </location>
</feature>
<feature type="region of interest" description="Disordered" evidence="3">
    <location>
        <begin position="287"/>
        <end position="306"/>
    </location>
</feature>
<feature type="compositionally biased region" description="Pro residues" evidence="3">
    <location>
        <begin position="296"/>
        <end position="306"/>
    </location>
</feature>
<keyword id="KW-0067">ATP-binding</keyword>
<keyword id="KW-0963">Cytoplasm</keyword>
<keyword id="KW-0275">Fatty acid biosynthesis</keyword>
<keyword id="KW-0276">Fatty acid metabolism</keyword>
<keyword id="KW-0444">Lipid biosynthesis</keyword>
<keyword id="KW-0443">Lipid metabolism</keyword>
<keyword id="KW-0547">Nucleotide-binding</keyword>
<keyword id="KW-0808">Transferase</keyword>
<gene>
    <name evidence="1" type="primary">accD</name>
    <name type="ordered locus">Mpop_4959</name>
</gene>
<proteinExistence type="inferred from homology"/>
<dbReference type="EC" id="2.1.3.15" evidence="1"/>
<dbReference type="EMBL" id="CP001029">
    <property type="protein sequence ID" value="ACB83055.1"/>
    <property type="molecule type" value="Genomic_DNA"/>
</dbReference>
<dbReference type="RefSeq" id="WP_012456653.1">
    <property type="nucleotide sequence ID" value="NC_010725.1"/>
</dbReference>
<dbReference type="SMR" id="B1ZLY6"/>
<dbReference type="STRING" id="441620.Mpop_4959"/>
<dbReference type="KEGG" id="mpo:Mpop_4959"/>
<dbReference type="eggNOG" id="COG0777">
    <property type="taxonomic scope" value="Bacteria"/>
</dbReference>
<dbReference type="HOGENOM" id="CLU_015486_1_0_5"/>
<dbReference type="OrthoDB" id="9772975at2"/>
<dbReference type="UniPathway" id="UPA00655">
    <property type="reaction ID" value="UER00711"/>
</dbReference>
<dbReference type="Proteomes" id="UP000007136">
    <property type="component" value="Chromosome"/>
</dbReference>
<dbReference type="GO" id="GO:0009329">
    <property type="term" value="C:acetate CoA-transferase complex"/>
    <property type="evidence" value="ECO:0007669"/>
    <property type="project" value="TreeGrafter"/>
</dbReference>
<dbReference type="GO" id="GO:0003989">
    <property type="term" value="F:acetyl-CoA carboxylase activity"/>
    <property type="evidence" value="ECO:0007669"/>
    <property type="project" value="InterPro"/>
</dbReference>
<dbReference type="GO" id="GO:0005524">
    <property type="term" value="F:ATP binding"/>
    <property type="evidence" value="ECO:0007669"/>
    <property type="project" value="UniProtKB-KW"/>
</dbReference>
<dbReference type="GO" id="GO:0016743">
    <property type="term" value="F:carboxyl- or carbamoyltransferase activity"/>
    <property type="evidence" value="ECO:0007669"/>
    <property type="project" value="UniProtKB-UniRule"/>
</dbReference>
<dbReference type="GO" id="GO:0006633">
    <property type="term" value="P:fatty acid biosynthetic process"/>
    <property type="evidence" value="ECO:0007669"/>
    <property type="project" value="UniProtKB-KW"/>
</dbReference>
<dbReference type="GO" id="GO:2001295">
    <property type="term" value="P:malonyl-CoA biosynthetic process"/>
    <property type="evidence" value="ECO:0007669"/>
    <property type="project" value="UniProtKB-UniRule"/>
</dbReference>
<dbReference type="Gene3D" id="3.90.226.10">
    <property type="entry name" value="2-enoyl-CoA Hydratase, Chain A, domain 1"/>
    <property type="match status" value="1"/>
</dbReference>
<dbReference type="HAMAP" id="MF_01395">
    <property type="entry name" value="AcetylCoA_CT_beta"/>
    <property type="match status" value="1"/>
</dbReference>
<dbReference type="InterPro" id="IPR034733">
    <property type="entry name" value="AcCoA_carboxyl_beta"/>
</dbReference>
<dbReference type="InterPro" id="IPR000438">
    <property type="entry name" value="Acetyl_CoA_COase_Trfase_b_su"/>
</dbReference>
<dbReference type="InterPro" id="IPR029045">
    <property type="entry name" value="ClpP/crotonase-like_dom_sf"/>
</dbReference>
<dbReference type="InterPro" id="IPR011762">
    <property type="entry name" value="COA_CT_N"/>
</dbReference>
<dbReference type="NCBIfam" id="TIGR00515">
    <property type="entry name" value="accD"/>
    <property type="match status" value="1"/>
</dbReference>
<dbReference type="PANTHER" id="PTHR42995">
    <property type="entry name" value="ACETYL-COENZYME A CARBOXYLASE CARBOXYL TRANSFERASE SUBUNIT BETA, CHLOROPLASTIC"/>
    <property type="match status" value="1"/>
</dbReference>
<dbReference type="PANTHER" id="PTHR42995:SF5">
    <property type="entry name" value="ACETYL-COENZYME A CARBOXYLASE CARBOXYL TRANSFERASE SUBUNIT BETA, CHLOROPLASTIC"/>
    <property type="match status" value="1"/>
</dbReference>
<dbReference type="Pfam" id="PF01039">
    <property type="entry name" value="Carboxyl_trans"/>
    <property type="match status" value="1"/>
</dbReference>
<dbReference type="PRINTS" id="PR01070">
    <property type="entry name" value="ACCCTRFRASEB"/>
</dbReference>
<dbReference type="SUPFAM" id="SSF52096">
    <property type="entry name" value="ClpP/crotonase"/>
    <property type="match status" value="1"/>
</dbReference>
<dbReference type="PROSITE" id="PS50980">
    <property type="entry name" value="COA_CT_NTER"/>
    <property type="match status" value="1"/>
</dbReference>
<organism>
    <name type="scientific">Methylorubrum populi (strain ATCC BAA-705 / NCIMB 13946 / BJ001)</name>
    <name type="common">Methylobacterium populi</name>
    <dbReference type="NCBI Taxonomy" id="441620"/>
    <lineage>
        <taxon>Bacteria</taxon>
        <taxon>Pseudomonadati</taxon>
        <taxon>Pseudomonadota</taxon>
        <taxon>Alphaproteobacteria</taxon>
        <taxon>Hyphomicrobiales</taxon>
        <taxon>Methylobacteriaceae</taxon>
        <taxon>Methylorubrum</taxon>
    </lineage>
</organism>
<comment type="function">
    <text evidence="1">Component of the acetyl coenzyme A carboxylase (ACC) complex. Biotin carboxylase (BC) catalyzes the carboxylation of biotin on its carrier protein (BCCP) and then the CO(2) group is transferred by the transcarboxylase to acetyl-CoA to form malonyl-CoA.</text>
</comment>
<comment type="catalytic activity">
    <reaction evidence="1">
        <text>N(6)-carboxybiotinyl-L-lysyl-[protein] + acetyl-CoA = N(6)-biotinyl-L-lysyl-[protein] + malonyl-CoA</text>
        <dbReference type="Rhea" id="RHEA:54728"/>
        <dbReference type="Rhea" id="RHEA-COMP:10505"/>
        <dbReference type="Rhea" id="RHEA-COMP:10506"/>
        <dbReference type="ChEBI" id="CHEBI:57288"/>
        <dbReference type="ChEBI" id="CHEBI:57384"/>
        <dbReference type="ChEBI" id="CHEBI:83144"/>
        <dbReference type="ChEBI" id="CHEBI:83145"/>
        <dbReference type="EC" id="2.1.3.15"/>
    </reaction>
</comment>
<comment type="pathway">
    <text evidence="1">Lipid metabolism; malonyl-CoA biosynthesis; malonyl-CoA from acetyl-CoA: step 1/1.</text>
</comment>
<comment type="subunit">
    <text evidence="1">Acetyl-CoA carboxylase is a heterohexamer composed of biotin carboxyl carrier protein (AccB), biotin carboxylase (AccC) and two subunits each of ACCase subunit alpha (AccA) and ACCase subunit beta (AccD).</text>
</comment>
<comment type="subcellular location">
    <subcellularLocation>
        <location evidence="1">Cytoplasm</location>
    </subcellularLocation>
</comment>
<comment type="similarity">
    <text evidence="1">Belongs to the AccD/PCCB family.</text>
</comment>
<name>ACCD_METPB</name>